<organism>
    <name type="scientific">Homo sapiens</name>
    <name type="common">Human</name>
    <dbReference type="NCBI Taxonomy" id="9606"/>
    <lineage>
        <taxon>Eukaryota</taxon>
        <taxon>Metazoa</taxon>
        <taxon>Chordata</taxon>
        <taxon>Craniata</taxon>
        <taxon>Vertebrata</taxon>
        <taxon>Euteleostomi</taxon>
        <taxon>Mammalia</taxon>
        <taxon>Eutheria</taxon>
        <taxon>Euarchontoglires</taxon>
        <taxon>Primates</taxon>
        <taxon>Haplorrhini</taxon>
        <taxon>Catarrhini</taxon>
        <taxon>Hominidae</taxon>
        <taxon>Homo</taxon>
    </lineage>
</organism>
<accession>Q7Z3H0</accession>
<accession>Q0VAA7</accession>
<accession>Q5K619</accession>
<accession>Q5K621</accession>
<accession>Q5K622</accession>
<accession>Q5K623</accession>
<accession>Q5K624</accession>
<accession>Q6ZUN0</accession>
<feature type="chain" id="PRO_0000243908" description="Photoreceptor ankyrin repeat protein">
    <location>
        <begin position="1"/>
        <end position="452"/>
    </location>
</feature>
<feature type="repeat" description="ANK 1" evidence="2">
    <location>
        <begin position="94"/>
        <end position="123"/>
    </location>
</feature>
<feature type="repeat" description="ANK 2" evidence="2">
    <location>
        <begin position="130"/>
        <end position="160"/>
    </location>
</feature>
<feature type="repeat" description="ANK 3" evidence="2">
    <location>
        <begin position="164"/>
        <end position="193"/>
    </location>
</feature>
<feature type="repeat" description="ANK 4" evidence="2">
    <location>
        <begin position="223"/>
        <end position="257"/>
    </location>
</feature>
<feature type="region of interest" description="Disordered" evidence="3">
    <location>
        <begin position="335"/>
        <end position="369"/>
    </location>
</feature>
<feature type="region of interest" description="Disordered" evidence="3">
    <location>
        <begin position="405"/>
        <end position="427"/>
    </location>
</feature>
<feature type="compositionally biased region" description="Pro residues" evidence="3">
    <location>
        <begin position="349"/>
        <end position="362"/>
    </location>
</feature>
<feature type="compositionally biased region" description="Polar residues" evidence="3">
    <location>
        <begin position="406"/>
        <end position="424"/>
    </location>
</feature>
<feature type="splice variant" id="VSP_059265" description="In isoform 1." evidence="5 7">
    <location>
        <begin position="1"/>
        <end position="135"/>
    </location>
</feature>
<feature type="splice variant" id="VSP_059266" description="In isoform 1." evidence="5 7">
    <original>C</original>
    <variation>CECVATLLMAG</variation>
    <location>
        <position position="213"/>
    </location>
</feature>
<feature type="splice variant" id="VSP_059267" description="In isoform 1." evidence="6">
    <original>GTAPPPPLVPQSPPGSPQRSPWVFVPYQSPQGILSKCLQWLQPRDSTSPRPQVPKILLSKASSSSHQCQPKPSPSGHQSLALPLWRYQELRIEKRKQEEEARMAQK</original>
    <variation>VPAEAQSFRTPKSGPSSLAIPGAQDREEETGGGGQNGTEVGEDGIGQAGNR</variation>
    <location>
        <begin position="347"/>
        <end position="452"/>
    </location>
</feature>
<feature type="sequence variant" id="VAR_059121" description="In dbSNP:rs697636.">
    <original>Y</original>
    <variation>F</variation>
    <location>
        <position position="140"/>
    </location>
</feature>
<feature type="sequence variant" id="VAR_059122" description="In dbSNP:rs34494292." evidence="4">
    <original>Q</original>
    <variation>R</variation>
    <location>
        <position position="257"/>
    </location>
</feature>
<feature type="sequence variant" id="VAR_059123" description="In dbSNP:rs12368048.">
    <original>T</original>
    <variation>N</variation>
    <location>
        <position position="313"/>
    </location>
</feature>
<feature type="sequence conflict" description="In Ref. 2; CAD97893/CAE45798." evidence="8" ref="2">
    <original>G</original>
    <variation>S</variation>
    <location>
        <position position="303"/>
    </location>
</feature>
<feature type="sequence variant" id="VAR_082795" description="In dbSNP:rs3180417." evidence="8">
    <original>V</original>
    <variation>I</variation>
    <location sequence="Q7Z3H0-1">
        <position position="261"/>
    </location>
</feature>
<feature type="sequence conflict" description="In Ref. 2; CAD97893/CAE45798." evidence="8" ref="2">
    <original>G</original>
    <variation>E</variation>
    <location sequence="Q7Z3H0-1">
        <position position="262"/>
    </location>
</feature>
<reference key="1">
    <citation type="journal article" date="2004" name="Nat. Genet.">
        <title>Complete sequencing and characterization of 21,243 full-length human cDNAs.</title>
        <authorList>
            <person name="Ota T."/>
            <person name="Suzuki Y."/>
            <person name="Nishikawa T."/>
            <person name="Otsuki T."/>
            <person name="Sugiyama T."/>
            <person name="Irie R."/>
            <person name="Wakamatsu A."/>
            <person name="Hayashi K."/>
            <person name="Sato H."/>
            <person name="Nagai K."/>
            <person name="Kimura K."/>
            <person name="Makita H."/>
            <person name="Sekine M."/>
            <person name="Obayashi M."/>
            <person name="Nishi T."/>
            <person name="Shibahara T."/>
            <person name="Tanaka T."/>
            <person name="Ishii S."/>
            <person name="Yamamoto J."/>
            <person name="Saito K."/>
            <person name="Kawai Y."/>
            <person name="Isono Y."/>
            <person name="Nakamura Y."/>
            <person name="Nagahari K."/>
            <person name="Murakami K."/>
            <person name="Yasuda T."/>
            <person name="Iwayanagi T."/>
            <person name="Wagatsuma M."/>
            <person name="Shiratori A."/>
            <person name="Sudo H."/>
            <person name="Hosoiri T."/>
            <person name="Kaku Y."/>
            <person name="Kodaira H."/>
            <person name="Kondo H."/>
            <person name="Sugawara M."/>
            <person name="Takahashi M."/>
            <person name="Kanda K."/>
            <person name="Yokoi T."/>
            <person name="Furuya T."/>
            <person name="Kikkawa E."/>
            <person name="Omura Y."/>
            <person name="Abe K."/>
            <person name="Kamihara K."/>
            <person name="Katsuta N."/>
            <person name="Sato K."/>
            <person name="Tanikawa M."/>
            <person name="Yamazaki M."/>
            <person name="Ninomiya K."/>
            <person name="Ishibashi T."/>
            <person name="Yamashita H."/>
            <person name="Murakawa K."/>
            <person name="Fujimori K."/>
            <person name="Tanai H."/>
            <person name="Kimata M."/>
            <person name="Watanabe M."/>
            <person name="Hiraoka S."/>
            <person name="Chiba Y."/>
            <person name="Ishida S."/>
            <person name="Ono Y."/>
            <person name="Takiguchi S."/>
            <person name="Watanabe S."/>
            <person name="Yosida M."/>
            <person name="Hotuta T."/>
            <person name="Kusano J."/>
            <person name="Kanehori K."/>
            <person name="Takahashi-Fujii A."/>
            <person name="Hara H."/>
            <person name="Tanase T.-O."/>
            <person name="Nomura Y."/>
            <person name="Togiya S."/>
            <person name="Komai F."/>
            <person name="Hara R."/>
            <person name="Takeuchi K."/>
            <person name="Arita M."/>
            <person name="Imose N."/>
            <person name="Musashino K."/>
            <person name="Yuuki H."/>
            <person name="Oshima A."/>
            <person name="Sasaki N."/>
            <person name="Aotsuka S."/>
            <person name="Yoshikawa Y."/>
            <person name="Matsunawa H."/>
            <person name="Ichihara T."/>
            <person name="Shiohata N."/>
            <person name="Sano S."/>
            <person name="Moriya S."/>
            <person name="Momiyama H."/>
            <person name="Satoh N."/>
            <person name="Takami S."/>
            <person name="Terashima Y."/>
            <person name="Suzuki O."/>
            <person name="Nakagawa S."/>
            <person name="Senoh A."/>
            <person name="Mizoguchi H."/>
            <person name="Goto Y."/>
            <person name="Shimizu F."/>
            <person name="Wakebe H."/>
            <person name="Hishigaki H."/>
            <person name="Watanabe T."/>
            <person name="Sugiyama A."/>
            <person name="Takemoto M."/>
            <person name="Kawakami B."/>
            <person name="Yamazaki M."/>
            <person name="Watanabe K."/>
            <person name="Kumagai A."/>
            <person name="Itakura S."/>
            <person name="Fukuzumi Y."/>
            <person name="Fujimori Y."/>
            <person name="Komiyama M."/>
            <person name="Tashiro H."/>
            <person name="Tanigami A."/>
            <person name="Fujiwara T."/>
            <person name="Ono T."/>
            <person name="Yamada K."/>
            <person name="Fujii Y."/>
            <person name="Ozaki K."/>
            <person name="Hirao M."/>
            <person name="Ohmori Y."/>
            <person name="Kawabata A."/>
            <person name="Hikiji T."/>
            <person name="Kobatake N."/>
            <person name="Inagaki H."/>
            <person name="Ikema Y."/>
            <person name="Okamoto S."/>
            <person name="Okitani R."/>
            <person name="Kawakami T."/>
            <person name="Noguchi S."/>
            <person name="Itoh T."/>
            <person name="Shigeta K."/>
            <person name="Senba T."/>
            <person name="Matsumura K."/>
            <person name="Nakajima Y."/>
            <person name="Mizuno T."/>
            <person name="Morinaga M."/>
            <person name="Sasaki M."/>
            <person name="Togashi T."/>
            <person name="Oyama M."/>
            <person name="Hata H."/>
            <person name="Watanabe M."/>
            <person name="Komatsu T."/>
            <person name="Mizushima-Sugano J."/>
            <person name="Satoh T."/>
            <person name="Shirai Y."/>
            <person name="Takahashi Y."/>
            <person name="Nakagawa K."/>
            <person name="Okumura K."/>
            <person name="Nagase T."/>
            <person name="Nomura N."/>
            <person name="Kikuchi H."/>
            <person name="Masuho Y."/>
            <person name="Yamashita R."/>
            <person name="Nakai K."/>
            <person name="Yada T."/>
            <person name="Nakamura Y."/>
            <person name="Ohara O."/>
            <person name="Isogai T."/>
            <person name="Sugano S."/>
        </authorList>
    </citation>
    <scope>NUCLEOTIDE SEQUENCE [LARGE SCALE MRNA] (ISOFORM 2)</scope>
    <scope>VARIANTS PHE-140 AND ARG-257</scope>
    <source>
        <tissue>Placenta</tissue>
    </source>
</reference>
<reference key="2">
    <citation type="journal article" date="2007" name="BMC Genomics">
        <title>The full-ORF clone resource of the German cDNA consortium.</title>
        <authorList>
            <person name="Bechtel S."/>
            <person name="Rosenfelder H."/>
            <person name="Duda A."/>
            <person name="Schmidt C.P."/>
            <person name="Ernst U."/>
            <person name="Wellenreuther R."/>
            <person name="Mehrle A."/>
            <person name="Schuster C."/>
            <person name="Bahr A."/>
            <person name="Bloecker H."/>
            <person name="Heubner D."/>
            <person name="Hoerlein A."/>
            <person name="Michel G."/>
            <person name="Wedler H."/>
            <person name="Koehrer K."/>
            <person name="Ottenwaelder B."/>
            <person name="Poustka A."/>
            <person name="Wiemann S."/>
            <person name="Schupp I."/>
        </authorList>
    </citation>
    <scope>NUCLEOTIDE SEQUENCE [LARGE SCALE MRNA] (ISOFORM 1)</scope>
    <source>
        <tissue>Retina</tissue>
    </source>
</reference>
<reference key="3">
    <citation type="journal article" date="2006" name="Nature">
        <title>The finished DNA sequence of human chromosome 12.</title>
        <authorList>
            <person name="Scherer S.E."/>
            <person name="Muzny D.M."/>
            <person name="Buhay C.J."/>
            <person name="Chen R."/>
            <person name="Cree A."/>
            <person name="Ding Y."/>
            <person name="Dugan-Rocha S."/>
            <person name="Gill R."/>
            <person name="Gunaratne P."/>
            <person name="Harris R.A."/>
            <person name="Hawes A.C."/>
            <person name="Hernandez J."/>
            <person name="Hodgson A.V."/>
            <person name="Hume J."/>
            <person name="Jackson A."/>
            <person name="Khan Z.M."/>
            <person name="Kovar-Smith C."/>
            <person name="Lewis L.R."/>
            <person name="Lozado R.J."/>
            <person name="Metzker M.L."/>
            <person name="Milosavljevic A."/>
            <person name="Miner G.R."/>
            <person name="Montgomery K.T."/>
            <person name="Morgan M.B."/>
            <person name="Nazareth L.V."/>
            <person name="Scott G."/>
            <person name="Sodergren E."/>
            <person name="Song X.-Z."/>
            <person name="Steffen D."/>
            <person name="Lovering R.C."/>
            <person name="Wheeler D.A."/>
            <person name="Worley K.C."/>
            <person name="Yuan Y."/>
            <person name="Zhang Z."/>
            <person name="Adams C.Q."/>
            <person name="Ansari-Lari M.A."/>
            <person name="Ayele M."/>
            <person name="Brown M.J."/>
            <person name="Chen G."/>
            <person name="Chen Z."/>
            <person name="Clerc-Blankenburg K.P."/>
            <person name="Davis C."/>
            <person name="Delgado O."/>
            <person name="Dinh H.H."/>
            <person name="Draper H."/>
            <person name="Gonzalez-Garay M.L."/>
            <person name="Havlak P."/>
            <person name="Jackson L.R."/>
            <person name="Jacob L.S."/>
            <person name="Kelly S.H."/>
            <person name="Li L."/>
            <person name="Li Z."/>
            <person name="Liu J."/>
            <person name="Liu W."/>
            <person name="Lu J."/>
            <person name="Maheshwari M."/>
            <person name="Nguyen B.-V."/>
            <person name="Okwuonu G.O."/>
            <person name="Pasternak S."/>
            <person name="Perez L.M."/>
            <person name="Plopper F.J.H."/>
            <person name="Santibanez J."/>
            <person name="Shen H."/>
            <person name="Tabor P.E."/>
            <person name="Verduzco D."/>
            <person name="Waldron L."/>
            <person name="Wang Q."/>
            <person name="Williams G.A."/>
            <person name="Zhang J."/>
            <person name="Zhou J."/>
            <person name="Allen C.C."/>
            <person name="Amin A.G."/>
            <person name="Anyalebechi V."/>
            <person name="Bailey M."/>
            <person name="Barbaria J.A."/>
            <person name="Bimage K.E."/>
            <person name="Bryant N.P."/>
            <person name="Burch P.E."/>
            <person name="Burkett C.E."/>
            <person name="Burrell K.L."/>
            <person name="Calderon E."/>
            <person name="Cardenas V."/>
            <person name="Carter K."/>
            <person name="Casias K."/>
            <person name="Cavazos I."/>
            <person name="Cavazos S.R."/>
            <person name="Ceasar H."/>
            <person name="Chacko J."/>
            <person name="Chan S.N."/>
            <person name="Chavez D."/>
            <person name="Christopoulos C."/>
            <person name="Chu J."/>
            <person name="Cockrell R."/>
            <person name="Cox C.D."/>
            <person name="Dang M."/>
            <person name="Dathorne S.R."/>
            <person name="David R."/>
            <person name="Davis C.M."/>
            <person name="Davy-Carroll L."/>
            <person name="Deshazo D.R."/>
            <person name="Donlin J.E."/>
            <person name="D'Souza L."/>
            <person name="Eaves K.A."/>
            <person name="Egan A."/>
            <person name="Emery-Cohen A.J."/>
            <person name="Escotto M."/>
            <person name="Flagg N."/>
            <person name="Forbes L.D."/>
            <person name="Gabisi A.M."/>
            <person name="Garza M."/>
            <person name="Hamilton C."/>
            <person name="Henderson N."/>
            <person name="Hernandez O."/>
            <person name="Hines S."/>
            <person name="Hogues M.E."/>
            <person name="Huang M."/>
            <person name="Idlebird D.G."/>
            <person name="Johnson R."/>
            <person name="Jolivet A."/>
            <person name="Jones S."/>
            <person name="Kagan R."/>
            <person name="King L.M."/>
            <person name="Leal B."/>
            <person name="Lebow H."/>
            <person name="Lee S."/>
            <person name="LeVan J.M."/>
            <person name="Lewis L.C."/>
            <person name="London P."/>
            <person name="Lorensuhewa L.M."/>
            <person name="Loulseged H."/>
            <person name="Lovett D.A."/>
            <person name="Lucier A."/>
            <person name="Lucier R.L."/>
            <person name="Ma J."/>
            <person name="Madu R.C."/>
            <person name="Mapua P."/>
            <person name="Martindale A.D."/>
            <person name="Martinez E."/>
            <person name="Massey E."/>
            <person name="Mawhiney S."/>
            <person name="Meador M.G."/>
            <person name="Mendez S."/>
            <person name="Mercado C."/>
            <person name="Mercado I.C."/>
            <person name="Merritt C.E."/>
            <person name="Miner Z.L."/>
            <person name="Minja E."/>
            <person name="Mitchell T."/>
            <person name="Mohabbat F."/>
            <person name="Mohabbat K."/>
            <person name="Montgomery B."/>
            <person name="Moore N."/>
            <person name="Morris S."/>
            <person name="Munidasa M."/>
            <person name="Ngo R.N."/>
            <person name="Nguyen N.B."/>
            <person name="Nickerson E."/>
            <person name="Nwaokelemeh O.O."/>
            <person name="Nwokenkwo S."/>
            <person name="Obregon M."/>
            <person name="Oguh M."/>
            <person name="Oragunye N."/>
            <person name="Oviedo R.J."/>
            <person name="Parish B.J."/>
            <person name="Parker D.N."/>
            <person name="Parrish J."/>
            <person name="Parks K.L."/>
            <person name="Paul H.A."/>
            <person name="Payton B.A."/>
            <person name="Perez A."/>
            <person name="Perrin W."/>
            <person name="Pickens A."/>
            <person name="Primus E.L."/>
            <person name="Pu L.-L."/>
            <person name="Puazo M."/>
            <person name="Quiles M.M."/>
            <person name="Quiroz J.B."/>
            <person name="Rabata D."/>
            <person name="Reeves K."/>
            <person name="Ruiz S.J."/>
            <person name="Shao H."/>
            <person name="Sisson I."/>
            <person name="Sonaike T."/>
            <person name="Sorelle R.P."/>
            <person name="Sutton A.E."/>
            <person name="Svatek A.F."/>
            <person name="Svetz L.A."/>
            <person name="Tamerisa K.S."/>
            <person name="Taylor T.R."/>
            <person name="Teague B."/>
            <person name="Thomas N."/>
            <person name="Thorn R.D."/>
            <person name="Trejos Z.Y."/>
            <person name="Trevino B.K."/>
            <person name="Ukegbu O.N."/>
            <person name="Urban J.B."/>
            <person name="Vasquez L.I."/>
            <person name="Vera V.A."/>
            <person name="Villasana D.M."/>
            <person name="Wang L."/>
            <person name="Ward-Moore S."/>
            <person name="Warren J.T."/>
            <person name="Wei X."/>
            <person name="White F."/>
            <person name="Williamson A.L."/>
            <person name="Wleczyk R."/>
            <person name="Wooden H.S."/>
            <person name="Wooden S.H."/>
            <person name="Yen J."/>
            <person name="Yoon L."/>
            <person name="Yoon V."/>
            <person name="Zorrilla S.E."/>
            <person name="Nelson D."/>
            <person name="Kucherlapati R."/>
            <person name="Weinstock G."/>
            <person name="Gibbs R.A."/>
        </authorList>
    </citation>
    <scope>NUCLEOTIDE SEQUENCE [LARGE SCALE GENOMIC DNA]</scope>
</reference>
<reference key="4">
    <citation type="journal article" date="2004" name="Genome Res.">
        <title>The status, quality, and expansion of the NIH full-length cDNA project: the Mammalian Gene Collection (MGC).</title>
        <authorList>
            <consortium name="The MGC Project Team"/>
        </authorList>
    </citation>
    <scope>NUCLEOTIDE SEQUENCE [LARGE SCALE MRNA] (ISOFORM 1)</scope>
</reference>
<reference key="5">
    <citation type="submission" date="2002-05" db="EMBL/GenBank/DDBJ databases">
        <title>Retina-abundant C12orf7 gene.</title>
        <authorList>
            <person name="Schulz H.L."/>
            <person name="Stoehr H.B."/>
            <person name="Weber B.H.F."/>
        </authorList>
    </citation>
    <scope>NUCLEOTIDE SEQUENCE [MRNA] OF 136-346 (ISOFORM 1)</scope>
</reference>
<protein>
    <recommendedName>
        <fullName evidence="1">Photoreceptor ankyrin repeat protein</fullName>
    </recommendedName>
    <alternativeName>
        <fullName evidence="9">Ankyrin repeat domain-containing protein 33</fullName>
    </alternativeName>
</protein>
<dbReference type="EMBL" id="AK125517">
    <property type="protein sequence ID" value="BAC86190.1"/>
    <property type="molecule type" value="mRNA"/>
</dbReference>
<dbReference type="EMBL" id="BX537908">
    <property type="protein sequence ID" value="CAD97893.1"/>
    <property type="molecule type" value="mRNA"/>
</dbReference>
<dbReference type="EMBL" id="BX640656">
    <property type="protein sequence ID" value="CAE45798.1"/>
    <property type="molecule type" value="mRNA"/>
</dbReference>
<dbReference type="EMBL" id="AC025259">
    <property type="status" value="NOT_ANNOTATED_CDS"/>
    <property type="molecule type" value="Genomic_DNA"/>
</dbReference>
<dbReference type="EMBL" id="BC121153">
    <property type="protein sequence ID" value="AAI21154.1"/>
    <property type="molecule type" value="mRNA"/>
</dbReference>
<dbReference type="EMBL" id="AF517112">
    <property type="protein sequence ID" value="AAQ07991.1"/>
    <property type="status" value="ALT_INIT"/>
    <property type="molecule type" value="mRNA"/>
</dbReference>
<dbReference type="EMBL" id="AF517113">
    <property type="protein sequence ID" value="AAQ07992.1"/>
    <property type="status" value="ALT_INIT"/>
    <property type="molecule type" value="mRNA"/>
</dbReference>
<dbReference type="EMBL" id="AF517114">
    <property type="protein sequence ID" value="AAQ07993.1"/>
    <property type="molecule type" value="mRNA"/>
</dbReference>
<dbReference type="EMBL" id="AF517115">
    <property type="protein sequence ID" value="AAQ07994.1"/>
    <property type="molecule type" value="mRNA"/>
</dbReference>
<dbReference type="EMBL" id="AF517118">
    <property type="protein sequence ID" value="AAQ07996.1"/>
    <property type="molecule type" value="mRNA"/>
</dbReference>
<dbReference type="CCDS" id="CCDS44892.1">
    <molecule id="Q7Z3H0-1"/>
</dbReference>
<dbReference type="CCDS" id="CCDS8815.1">
    <molecule id="Q7Z3H0-2"/>
</dbReference>
<dbReference type="RefSeq" id="NP_001123487.1">
    <molecule id="Q7Z3H0-1"/>
    <property type="nucleotide sequence ID" value="NM_001130015.2"/>
</dbReference>
<dbReference type="RefSeq" id="NP_001291388.1">
    <property type="nucleotide sequence ID" value="NM_001304459.1"/>
</dbReference>
<dbReference type="RefSeq" id="NP_872414.3">
    <molecule id="Q7Z3H0-2"/>
    <property type="nucleotide sequence ID" value="NM_182608.3"/>
</dbReference>
<dbReference type="SMR" id="Q7Z3H0"/>
<dbReference type="BioGRID" id="131136">
    <property type="interactions" value="15"/>
</dbReference>
<dbReference type="FunCoup" id="Q7Z3H0">
    <property type="interactions" value="1"/>
</dbReference>
<dbReference type="IntAct" id="Q7Z3H0">
    <property type="interactions" value="14"/>
</dbReference>
<dbReference type="STRING" id="9606.ENSP00000301190"/>
<dbReference type="GlyGen" id="Q7Z3H0">
    <property type="glycosylation" value="1 site"/>
</dbReference>
<dbReference type="PhosphoSitePlus" id="Q7Z3H0"/>
<dbReference type="BioMuta" id="ANKRD33"/>
<dbReference type="DMDM" id="296439441"/>
<dbReference type="jPOST" id="Q7Z3H0"/>
<dbReference type="MassIVE" id="Q7Z3H0"/>
<dbReference type="PaxDb" id="9606-ENSP00000301190"/>
<dbReference type="PeptideAtlas" id="Q7Z3H0"/>
<dbReference type="ProteomicsDB" id="69048">
    <molecule id="Q7Z3H0-2"/>
</dbReference>
<dbReference type="Antibodypedia" id="50682">
    <property type="antibodies" value="63 antibodies from 19 providers"/>
</dbReference>
<dbReference type="DNASU" id="341405"/>
<dbReference type="Ensembl" id="ENST00000301190.11">
    <molecule id="Q7Z3H0-2"/>
    <property type="protein sequence ID" value="ENSP00000301190.6"/>
    <property type="gene ID" value="ENSG00000167612.13"/>
</dbReference>
<dbReference type="Ensembl" id="ENST00000340970.8">
    <molecule id="Q7Z3H0-1"/>
    <property type="protein sequence ID" value="ENSP00000344690.4"/>
    <property type="gene ID" value="ENSG00000167612.13"/>
</dbReference>
<dbReference type="GeneID" id="341405"/>
<dbReference type="KEGG" id="hsa:341405"/>
<dbReference type="MANE-Select" id="ENST00000301190.11">
    <property type="protein sequence ID" value="ENSP00000301190.6"/>
    <property type="RefSeq nucleotide sequence ID" value="NM_182608.4"/>
    <property type="RefSeq protein sequence ID" value="NP_872414.3"/>
</dbReference>
<dbReference type="UCSC" id="uc001rzd.4">
    <molecule id="Q7Z3H0-2"/>
    <property type="organism name" value="human"/>
</dbReference>
<dbReference type="AGR" id="HGNC:13788"/>
<dbReference type="CTD" id="341405"/>
<dbReference type="DisGeNET" id="341405"/>
<dbReference type="GeneCards" id="ANKRD33"/>
<dbReference type="HGNC" id="HGNC:13788">
    <property type="gene designation" value="ANKRD33"/>
</dbReference>
<dbReference type="HPA" id="ENSG00000167612">
    <property type="expression patterns" value="Tissue enriched (retina)"/>
</dbReference>
<dbReference type="MIM" id="620857">
    <property type="type" value="gene"/>
</dbReference>
<dbReference type="neXtProt" id="NX_Q7Z3H0"/>
<dbReference type="OpenTargets" id="ENSG00000167612"/>
<dbReference type="PharmGKB" id="PA25508"/>
<dbReference type="VEuPathDB" id="HostDB:ENSG00000167612"/>
<dbReference type="eggNOG" id="ENOG502QRWZ">
    <property type="taxonomic scope" value="Eukaryota"/>
</dbReference>
<dbReference type="GeneTree" id="ENSGT00500000044852"/>
<dbReference type="HOGENOM" id="CLU_049994_0_0_1"/>
<dbReference type="InParanoid" id="Q7Z3H0"/>
<dbReference type="OMA" id="RPQVPKI"/>
<dbReference type="OrthoDB" id="10057496at2759"/>
<dbReference type="PAN-GO" id="Q7Z3H0">
    <property type="GO annotations" value="2 GO annotations based on evolutionary models"/>
</dbReference>
<dbReference type="PhylomeDB" id="Q7Z3H0"/>
<dbReference type="TreeFam" id="TF332022"/>
<dbReference type="PathwayCommons" id="Q7Z3H0"/>
<dbReference type="SignaLink" id="Q7Z3H0"/>
<dbReference type="BioGRID-ORCS" id="341405">
    <property type="hits" value="14 hits in 1145 CRISPR screens"/>
</dbReference>
<dbReference type="ChiTaRS" id="ANKRD33">
    <property type="organism name" value="human"/>
</dbReference>
<dbReference type="GenomeRNAi" id="341405"/>
<dbReference type="Pharos" id="Q7Z3H0">
    <property type="development level" value="Tdark"/>
</dbReference>
<dbReference type="PRO" id="PR:Q7Z3H0"/>
<dbReference type="Proteomes" id="UP000005640">
    <property type="component" value="Chromosome 12"/>
</dbReference>
<dbReference type="RNAct" id="Q7Z3H0">
    <property type="molecule type" value="protein"/>
</dbReference>
<dbReference type="Bgee" id="ENSG00000167612">
    <property type="expression patterns" value="Expressed in primordial germ cell in gonad and 48 other cell types or tissues"/>
</dbReference>
<dbReference type="ExpressionAtlas" id="Q7Z3H0">
    <property type="expression patterns" value="baseline and differential"/>
</dbReference>
<dbReference type="GO" id="GO:0005829">
    <property type="term" value="C:cytosol"/>
    <property type="evidence" value="ECO:0007669"/>
    <property type="project" value="UniProtKB-SubCell"/>
</dbReference>
<dbReference type="GO" id="GO:0005634">
    <property type="term" value="C:nucleus"/>
    <property type="evidence" value="ECO:0007669"/>
    <property type="project" value="UniProtKB-SubCell"/>
</dbReference>
<dbReference type="GO" id="GO:0035914">
    <property type="term" value="P:skeletal muscle cell differentiation"/>
    <property type="evidence" value="ECO:0007669"/>
    <property type="project" value="Ensembl"/>
</dbReference>
<dbReference type="FunFam" id="1.25.40.20:FF:000289">
    <property type="entry name" value="Ankyrin repeat domain 33"/>
    <property type="match status" value="1"/>
</dbReference>
<dbReference type="Gene3D" id="1.25.40.20">
    <property type="entry name" value="Ankyrin repeat-containing domain"/>
    <property type="match status" value="1"/>
</dbReference>
<dbReference type="InterPro" id="IPR002110">
    <property type="entry name" value="Ankyrin_rpt"/>
</dbReference>
<dbReference type="InterPro" id="IPR036770">
    <property type="entry name" value="Ankyrin_rpt-contain_sf"/>
</dbReference>
<dbReference type="PANTHER" id="PTHR24173">
    <property type="entry name" value="ANKYRIN REPEAT CONTAINING"/>
    <property type="match status" value="1"/>
</dbReference>
<dbReference type="PANTHER" id="PTHR24173:SF29">
    <property type="entry name" value="PHOTORECEPTOR ANKYRIN REPEAT PROTEIN"/>
    <property type="match status" value="1"/>
</dbReference>
<dbReference type="Pfam" id="PF12796">
    <property type="entry name" value="Ank_2"/>
    <property type="match status" value="1"/>
</dbReference>
<dbReference type="SMART" id="SM00248">
    <property type="entry name" value="ANK"/>
    <property type="match status" value="4"/>
</dbReference>
<dbReference type="SUPFAM" id="SSF48403">
    <property type="entry name" value="Ankyrin repeat"/>
    <property type="match status" value="1"/>
</dbReference>
<dbReference type="PROSITE" id="PS50297">
    <property type="entry name" value="ANK_REP_REGION"/>
    <property type="match status" value="1"/>
</dbReference>
<dbReference type="PROSITE" id="PS50088">
    <property type="entry name" value="ANK_REPEAT"/>
    <property type="match status" value="1"/>
</dbReference>
<gene>
    <name evidence="9" type="primary">ANKRD33</name>
    <name type="synonym">C12orf7</name>
    <name type="synonym">PANKY</name>
</gene>
<name>PANKY_HUMAN</name>
<evidence type="ECO:0000250" key="1">
    <source>
        <dbReference type="UniProtKB" id="Q8BXP5"/>
    </source>
</evidence>
<evidence type="ECO:0000255" key="2"/>
<evidence type="ECO:0000256" key="3">
    <source>
        <dbReference type="SAM" id="MobiDB-lite"/>
    </source>
</evidence>
<evidence type="ECO:0000269" key="4">
    <source>
    </source>
</evidence>
<evidence type="ECO:0000269" key="5">
    <source>
    </source>
</evidence>
<evidence type="ECO:0000303" key="6">
    <source>
    </source>
</evidence>
<evidence type="ECO:0000303" key="7">
    <source>
    </source>
</evidence>
<evidence type="ECO:0000305" key="8"/>
<evidence type="ECO:0000312" key="9">
    <source>
        <dbReference type="HGNC" id="HGNC:13788"/>
    </source>
</evidence>
<comment type="function">
    <text evidence="1">Acts as a transcriptional repressor for CRX-activated photoreceptor gene regulation.</text>
</comment>
<comment type="interaction">
    <interactant intactId="EBI-16746154">
        <id>Q7Z3H0-1</id>
    </interactant>
    <interactant intactId="EBI-17183751">
        <id>X5D778</id>
        <label>ANKRD11</label>
    </interactant>
    <organismsDiffer>false</organismsDiffer>
    <experiments>3</experiments>
</comment>
<comment type="interaction">
    <interactant intactId="EBI-16746154">
        <id>Q7Z3H0-1</id>
    </interactant>
    <interactant intactId="EBI-10229433">
        <id>Q13515</id>
        <label>BFSP2</label>
    </interactant>
    <organismsDiffer>false</organismsDiffer>
    <experiments>3</experiments>
</comment>
<comment type="interaction">
    <interactant intactId="EBI-16746154">
        <id>Q7Z3H0-1</id>
    </interactant>
    <interactant intactId="EBI-347538">
        <id>Q9Y4H4</id>
        <label>GPSM3</label>
    </interactant>
    <organismsDiffer>false</organismsDiffer>
    <experiments>5</experiments>
</comment>
<comment type="interaction">
    <interactant intactId="EBI-16746154">
        <id>Q7Z3H0-1</id>
    </interactant>
    <interactant intactId="EBI-744820">
        <id>Q9UM19</id>
        <label>HPCAL4</label>
    </interactant>
    <organismsDiffer>false</organismsDiffer>
    <experiments>3</experiments>
</comment>
<comment type="interaction">
    <interactant intactId="EBI-16746154">
        <id>Q7Z3H0-1</id>
    </interactant>
    <interactant intactId="EBI-739890">
        <id>Q9P2K6</id>
        <label>KLHL42</label>
    </interactant>
    <organismsDiffer>false</organismsDiffer>
    <experiments>3</experiments>
</comment>
<comment type="interaction">
    <interactant intactId="EBI-16746154">
        <id>Q7Z3H0-1</id>
    </interactant>
    <interactant intactId="EBI-11978579">
        <id>O95983-2</id>
        <label>MBD3</label>
    </interactant>
    <organismsDiffer>false</organismsDiffer>
    <experiments>3</experiments>
</comment>
<comment type="interaction">
    <interactant intactId="EBI-16746154">
        <id>Q7Z3H0-1</id>
    </interactant>
    <interactant intactId="EBI-727004">
        <id>O00560</id>
        <label>SDCBP</label>
    </interactant>
    <organismsDiffer>false</organismsDiffer>
    <experiments>3</experiments>
</comment>
<comment type="interaction">
    <interactant intactId="EBI-16746154">
        <id>Q7Z3H0-1</id>
    </interactant>
    <interactant intactId="EBI-3939165">
        <id>O43711</id>
        <label>TLX3</label>
    </interactant>
    <organismsDiffer>false</organismsDiffer>
    <experiments>3</experiments>
</comment>
<comment type="interaction">
    <interactant intactId="EBI-16746154">
        <id>Q7Z3H0-1</id>
    </interactant>
    <interactant intactId="EBI-10262539">
        <id>Q8IWR1</id>
        <label>TRIM59</label>
    </interactant>
    <organismsDiffer>false</organismsDiffer>
    <experiments>3</experiments>
</comment>
<comment type="interaction">
    <interactant intactId="EBI-16746154">
        <id>Q7Z3H0-1</id>
    </interactant>
    <interactant intactId="EBI-947187">
        <id>Q9UHD9</id>
        <label>UBQLN2</label>
    </interactant>
    <organismsDiffer>false</organismsDiffer>
    <experiments>3</experiments>
</comment>
<comment type="interaction">
    <interactant intactId="EBI-16746154">
        <id>Q7Z3H0-1</id>
    </interactant>
    <interactant intactId="EBI-739895">
        <id>Q8N6Y0</id>
        <label>USHBP1</label>
    </interactant>
    <organismsDiffer>false</organismsDiffer>
    <experiments>3</experiments>
</comment>
<comment type="subcellular location">
    <subcellularLocation>
        <location evidence="1">Cytoplasm</location>
        <location evidence="1">Cytosol</location>
    </subcellularLocation>
    <subcellularLocation>
        <location evidence="1">Nucleus</location>
    </subcellularLocation>
</comment>
<comment type="alternative products">
    <event type="alternative splicing"/>
    <isoform>
        <id>Q7Z3H0-2</id>
        <name>2</name>
        <sequence type="displayed"/>
    </isoform>
    <isoform>
        <id>Q7Z3H0-1</id>
        <name>1</name>
        <sequence type="described" ref="VSP_059265 VSP_059266 VSP_059267"/>
    </isoform>
</comment>
<comment type="sequence caution" evidence="8">
    <conflict type="erroneous initiation">
        <sequence resource="EMBL-CDS" id="AAQ07991"/>
    </conflict>
    <text>Extended N-terminus.</text>
</comment>
<comment type="sequence caution" evidence="8">
    <conflict type="erroneous initiation">
        <sequence resource="EMBL-CDS" id="AAQ07992"/>
    </conflict>
    <text>Extended N-terminus.</text>
</comment>
<proteinExistence type="evidence at protein level"/>
<keyword id="KW-0025">Alternative splicing</keyword>
<keyword id="KW-0040">ANK repeat</keyword>
<keyword id="KW-0963">Cytoplasm</keyword>
<keyword id="KW-0539">Nucleus</keyword>
<keyword id="KW-1185">Reference proteome</keyword>
<keyword id="KW-0677">Repeat</keyword>
<sequence>MKVQPSVTCVASWGGIVHLEAFGDPVIVLRGAWAVPRVDCLIDTLRTPNASCMRKGTHLLVPCLEEEELALHRRRLDMSEALPCPGKETPTPGCRLGALYWACVHNDPTQLQAILDGGVSPEEATQVDSNGRTGLMVACYHGFQSVVALLSHCPFLDVNQQDKGGDTALMLAAQAGHVPLVSLLLNYYVGLDLERRDQRGLTALMKAAMRNRCADLTAVDPVRGKTALEWAVLTDSFDTVWRIRQLLRRPQVEQLSQHYKPEWPALSGLVAQAQAQAQVAPSLLERLQATLSLPFAPSPQEGGVLDHLVTATTSLASPFVTTACHTLCPDHPPSLGTRSKSVPELLGTAPPPPLVPQSPPGSPQRSPWVFVPYQSPQGILSKCLQWLQPRDSTSPRPQVPKILLSKASSSSHQCQPKPSPSGHQSLALPLWRYQELRIEKRKQEEEARMAQK</sequence>